<feature type="chain" id="PRO_0000319401" description="Putative mixed-linked glucan synthase 1">
    <location>
        <begin position="1"/>
        <end position="860"/>
    </location>
</feature>
<feature type="transmembrane region" description="Helical" evidence="2">
    <location>
        <begin position="63"/>
        <end position="83"/>
    </location>
</feature>
<feature type="transmembrane region" description="Helical" evidence="2">
    <location>
        <begin position="93"/>
        <end position="113"/>
    </location>
</feature>
<feature type="transmembrane region" description="Helical" evidence="2">
    <location>
        <begin position="625"/>
        <end position="645"/>
    </location>
</feature>
<feature type="transmembrane region" description="Helical" evidence="2">
    <location>
        <begin position="655"/>
        <end position="675"/>
    </location>
</feature>
<feature type="transmembrane region" description="Helical" evidence="2">
    <location>
        <begin position="693"/>
        <end position="713"/>
    </location>
</feature>
<feature type="transmembrane region" description="Helical" evidence="2">
    <location>
        <begin position="747"/>
        <end position="767"/>
    </location>
</feature>
<feature type="transmembrane region" description="Helical" evidence="2">
    <location>
        <begin position="781"/>
        <end position="801"/>
    </location>
</feature>
<feature type="transmembrane region" description="Helical" evidence="2">
    <location>
        <begin position="812"/>
        <end position="832"/>
    </location>
</feature>
<feature type="coiled-coil region" evidence="2">
    <location>
        <begin position="235"/>
        <end position="263"/>
    </location>
</feature>
<feature type="active site" evidence="2">
    <location>
        <position position="183"/>
    </location>
</feature>
<feature type="active site" evidence="2">
    <location>
        <position position="549"/>
    </location>
</feature>
<feature type="binding site" evidence="2">
    <location>
        <position position="381"/>
    </location>
    <ligand>
        <name>substrate</name>
    </ligand>
</feature>
<feature type="binding site" evidence="2">
    <location>
        <position position="383"/>
    </location>
    <ligand>
        <name>substrate</name>
    </ligand>
</feature>
<reference key="1">
    <citation type="journal article" date="2002" name="Plant Physiol.">
        <title>Cellulose synthase-like genes of rice.</title>
        <authorList>
            <person name="Hazen S.P."/>
            <person name="Scott-Craig J.S."/>
            <person name="Walton J.D."/>
        </authorList>
    </citation>
    <scope>NUCLEOTIDE SEQUENCE [GENOMIC DNA]</scope>
</reference>
<reference key="2">
    <citation type="journal article" date="2005" name="Nature">
        <title>The map-based sequence of the rice genome.</title>
        <authorList>
            <consortium name="International rice genome sequencing project (IRGSP)"/>
        </authorList>
    </citation>
    <scope>NUCLEOTIDE SEQUENCE [LARGE SCALE GENOMIC DNA]</scope>
    <source>
        <strain>cv. Nipponbare</strain>
    </source>
</reference>
<reference key="3">
    <citation type="journal article" date="2013" name="Rice">
        <title>Improvement of the Oryza sativa Nipponbare reference genome using next generation sequence and optical map data.</title>
        <authorList>
            <person name="Kawahara Y."/>
            <person name="de la Bastide M."/>
            <person name="Hamilton J.P."/>
            <person name="Kanamori H."/>
            <person name="McCombie W.R."/>
            <person name="Ouyang S."/>
            <person name="Schwartz D.C."/>
            <person name="Tanaka T."/>
            <person name="Wu J."/>
            <person name="Zhou S."/>
            <person name="Childs K.L."/>
            <person name="Davidson R.M."/>
            <person name="Lin H."/>
            <person name="Quesada-Ocampo L."/>
            <person name="Vaillancourt B."/>
            <person name="Sakai H."/>
            <person name="Lee S.S."/>
            <person name="Kim J."/>
            <person name="Numa H."/>
            <person name="Itoh T."/>
            <person name="Buell C.R."/>
            <person name="Matsumoto T."/>
        </authorList>
    </citation>
    <scope>GENOME REANNOTATION</scope>
    <source>
        <strain>cv. Nipponbare</strain>
    </source>
</reference>
<proteinExistence type="inferred from homology"/>
<comment type="function">
    <text evidence="1">May catalyze both beta-1,3 and beta-1,4 glycosidic linkage on beta-D-glucan. Essential for (1,3;1,4)-beta-D-glucans synthesis in grasses and cereals (Poaceae). The mixed-linked glucans (which are not present in walls of dicotyledons or most other monocotyledonous plants) are particularly important constituents of the walls of the starchy endosperm and aleurone cells of cereal grains such as oats, wheat, rice and barley. They can account for up to 70% by weight of the wall (By similarity).</text>
</comment>
<comment type="subcellular location">
    <subcellularLocation>
        <location evidence="3">Golgi apparatus membrane</location>
        <topology evidence="3">Multi-pass membrane protein</topology>
    </subcellularLocation>
</comment>
<comment type="similarity">
    <text evidence="3">Belongs to the glycosyltransferase 2 family. Plant cellulose synthase-like F subfamily.</text>
</comment>
<accession>Q6ZF89</accession>
<accession>Q944E2</accession>
<sequence length="860" mass="94970">MSAAAAVTSWTNGCWSPAATRVNDGGKDDVWVAVDEADVSGARGSDGGGRPPLFQTYKVKGSILHPYRFLILARLIAIVAFFAWRIRHKNRDGAWLWTMSMVGDVWFGFSWVLNQLPKQSPIKRVPDIAALADRHSGDLPGVDVFVTTVDPVDEPILYTVNTILSILAADYPVDRYACYLSDDGGTLVHYEAMVEVAKFAELWVPFCRKHCVEPRSPENYFAMKTQAYKGGVPGELMSDHRRVRREYEEFKVRIDSLSSTIRQRSDVYNAKHAGENATWMADGTHWPGTWFEPADNHQRGKHAGIVQVLLNHPSCKPRLGLAASAENPVDFSGVDVRLPMLVYISREKRPGYNHQKKAGAMNVMLRVSALLSNAPFVINFDGDHYVNNSQAFRAPMCFMLDGRGRGGENTAFVQFPQRFDDVDPTDRYANHNRVFFDGTMLSLNGLQGPSYLGTGTMFRRVALYGVEPPRWGAAASQIKAMDIANKFGSSTSFVGTMLDGANQERSITPLAVLDESVAGDLAALTACAYEDGTSWGRDVGWVYNIATEDVVTGFRMHRQGWRSVYASVEPAAFRGTAPINLTERLYQILRWSGGSLEMFFSHSNALLAGRRLHPLQRVAYLNMSTYPIVTVFIFFYNLFPVMWLISEQYYIQRPFGEYLLYLVAVIAMIHVIGMFEVKWAGITLLDWCRNEQFYMIGSTGVYPTAVLYMALKLVTGKGIYFRLTSKQTAASSGDKFADLYTVRWVPLLIPTIVIMVVNVAAVGVAVGKAAAWGPLTEPGWLAVLGMVFNVWILVLLYPFALGVMGQWGKRPAVLFVAMAMAVAAVAAMYVAFGAPYQAELSGVAASLGKVAAASLTGPSG</sequence>
<evidence type="ECO:0000250" key="1"/>
<evidence type="ECO:0000255" key="2"/>
<evidence type="ECO:0000305" key="3"/>
<name>CSLF1_ORYSJ</name>
<protein>
    <recommendedName>
        <fullName>Putative mixed-linked glucan synthase 1</fullName>
        <ecNumber>2.4.1.-</ecNumber>
    </recommendedName>
    <alternativeName>
        <fullName>1,3/1,4-beta D-glucan synthase 1</fullName>
    </alternativeName>
    <alternativeName>
        <fullName>Cellulose synthase-like protein F1</fullName>
    </alternativeName>
    <alternativeName>
        <fullName>OsCslF1</fullName>
    </alternativeName>
</protein>
<dbReference type="EC" id="2.4.1.-"/>
<dbReference type="EMBL" id="AF432502">
    <property type="protein sequence ID" value="AAL25131.1"/>
    <property type="molecule type" value="Genomic_DNA"/>
</dbReference>
<dbReference type="EMBL" id="AP004261">
    <property type="protein sequence ID" value="BAC83318.1"/>
    <property type="molecule type" value="Genomic_DNA"/>
</dbReference>
<dbReference type="EMBL" id="AP014963">
    <property type="status" value="NOT_ANNOTATED_CDS"/>
    <property type="molecule type" value="Genomic_DNA"/>
</dbReference>
<dbReference type="SMR" id="Q6ZF89"/>
<dbReference type="FunCoup" id="Q6ZF89">
    <property type="interactions" value="9"/>
</dbReference>
<dbReference type="STRING" id="39947.Q6ZF89"/>
<dbReference type="CAZy" id="GT2">
    <property type="family name" value="Glycosyltransferase Family 2"/>
</dbReference>
<dbReference type="PaxDb" id="39947-Q6ZF89"/>
<dbReference type="GeneID" id="107276327"/>
<dbReference type="KEGG" id="osa:107276327"/>
<dbReference type="InParanoid" id="Q6ZF89"/>
<dbReference type="OrthoDB" id="591726at2759"/>
<dbReference type="Proteomes" id="UP000000763">
    <property type="component" value="Chromosome 7"/>
</dbReference>
<dbReference type="Proteomes" id="UP000059680">
    <property type="component" value="Chromosome 7"/>
</dbReference>
<dbReference type="GO" id="GO:0000139">
    <property type="term" value="C:Golgi membrane"/>
    <property type="evidence" value="ECO:0007669"/>
    <property type="project" value="UniProtKB-SubCell"/>
</dbReference>
<dbReference type="GO" id="GO:0005886">
    <property type="term" value="C:plasma membrane"/>
    <property type="evidence" value="ECO:0000318"/>
    <property type="project" value="GO_Central"/>
</dbReference>
<dbReference type="GO" id="GO:0016760">
    <property type="term" value="F:cellulose synthase (UDP-forming) activity"/>
    <property type="evidence" value="ECO:0007669"/>
    <property type="project" value="InterPro"/>
</dbReference>
<dbReference type="GO" id="GO:0071555">
    <property type="term" value="P:cell wall organization"/>
    <property type="evidence" value="ECO:0007669"/>
    <property type="project" value="UniProtKB-KW"/>
</dbReference>
<dbReference type="GO" id="GO:0030244">
    <property type="term" value="P:cellulose biosynthetic process"/>
    <property type="evidence" value="ECO:0007669"/>
    <property type="project" value="InterPro"/>
</dbReference>
<dbReference type="GO" id="GO:0009833">
    <property type="term" value="P:plant-type primary cell wall biogenesis"/>
    <property type="evidence" value="ECO:0000318"/>
    <property type="project" value="GO_Central"/>
</dbReference>
<dbReference type="FunFam" id="3.90.550.10:FF:000027">
    <property type="entry name" value="Cellulose synthase-like protein D4"/>
    <property type="match status" value="1"/>
</dbReference>
<dbReference type="Gene3D" id="3.90.550.10">
    <property type="entry name" value="Spore Coat Polysaccharide Biosynthesis Protein SpsA, Chain A"/>
    <property type="match status" value="1"/>
</dbReference>
<dbReference type="InterPro" id="IPR005150">
    <property type="entry name" value="Cellulose_synth"/>
</dbReference>
<dbReference type="InterPro" id="IPR029044">
    <property type="entry name" value="Nucleotide-diphossugar_trans"/>
</dbReference>
<dbReference type="PANTHER" id="PTHR13301">
    <property type="entry name" value="X-BOX TRANSCRIPTION FACTOR-RELATED"/>
    <property type="match status" value="1"/>
</dbReference>
<dbReference type="Pfam" id="PF03552">
    <property type="entry name" value="Cellulose_synt"/>
    <property type="match status" value="2"/>
</dbReference>
<dbReference type="SUPFAM" id="SSF53448">
    <property type="entry name" value="Nucleotide-diphospho-sugar transferases"/>
    <property type="match status" value="1"/>
</dbReference>
<keyword id="KW-0961">Cell wall biogenesis/degradation</keyword>
<keyword id="KW-0175">Coiled coil</keyword>
<keyword id="KW-0328">Glycosyltransferase</keyword>
<keyword id="KW-0333">Golgi apparatus</keyword>
<keyword id="KW-0472">Membrane</keyword>
<keyword id="KW-1185">Reference proteome</keyword>
<keyword id="KW-0808">Transferase</keyword>
<keyword id="KW-0812">Transmembrane</keyword>
<keyword id="KW-1133">Transmembrane helix</keyword>
<gene>
    <name type="primary">CSFL1</name>
    <name type="ordered locus">Os07g0553000</name>
    <name type="ordered locus">LOC_Os07g36700</name>
    <name type="ORF">P0013G11.6</name>
</gene>
<organism>
    <name type="scientific">Oryza sativa subsp. japonica</name>
    <name type="common">Rice</name>
    <dbReference type="NCBI Taxonomy" id="39947"/>
    <lineage>
        <taxon>Eukaryota</taxon>
        <taxon>Viridiplantae</taxon>
        <taxon>Streptophyta</taxon>
        <taxon>Embryophyta</taxon>
        <taxon>Tracheophyta</taxon>
        <taxon>Spermatophyta</taxon>
        <taxon>Magnoliopsida</taxon>
        <taxon>Liliopsida</taxon>
        <taxon>Poales</taxon>
        <taxon>Poaceae</taxon>
        <taxon>BOP clade</taxon>
        <taxon>Oryzoideae</taxon>
        <taxon>Oryzeae</taxon>
        <taxon>Oryzinae</taxon>
        <taxon>Oryza</taxon>
        <taxon>Oryza sativa</taxon>
    </lineage>
</organism>